<evidence type="ECO:0000255" key="1">
    <source>
        <dbReference type="HAMAP-Rule" id="MF_01357"/>
    </source>
</evidence>
<gene>
    <name evidence="1" type="primary">nuoC</name>
    <name type="ordered locus">BT_1215</name>
</gene>
<organism>
    <name type="scientific">Bartonella tribocorum (strain CIP 105476 / IBS 506)</name>
    <dbReference type="NCBI Taxonomy" id="382640"/>
    <lineage>
        <taxon>Bacteria</taxon>
        <taxon>Pseudomonadati</taxon>
        <taxon>Pseudomonadota</taxon>
        <taxon>Alphaproteobacteria</taxon>
        <taxon>Hyphomicrobiales</taxon>
        <taxon>Bartonellaceae</taxon>
        <taxon>Bartonella</taxon>
    </lineage>
</organism>
<proteinExistence type="inferred from homology"/>
<accession>A9IUQ0</accession>
<name>NUOC_BART1</name>
<reference key="1">
    <citation type="journal article" date="2007" name="Nat. Genet.">
        <title>Genomic analysis of Bartonella identifies type IV secretion systems as host adaptability factors.</title>
        <authorList>
            <person name="Saenz H.L."/>
            <person name="Engel P."/>
            <person name="Stoeckli M.C."/>
            <person name="Lanz C."/>
            <person name="Raddatz G."/>
            <person name="Vayssier-Taussat M."/>
            <person name="Birtles R."/>
            <person name="Schuster S.C."/>
            <person name="Dehio C."/>
        </authorList>
    </citation>
    <scope>NUCLEOTIDE SEQUENCE [LARGE SCALE GENOMIC DNA]</scope>
    <source>
        <strain>CIP 105476 / IBS 506</strain>
    </source>
</reference>
<dbReference type="EC" id="7.1.1.-" evidence="1"/>
<dbReference type="EMBL" id="AM260525">
    <property type="protein sequence ID" value="CAK01585.1"/>
    <property type="molecule type" value="Genomic_DNA"/>
</dbReference>
<dbReference type="RefSeq" id="WP_012231787.1">
    <property type="nucleotide sequence ID" value="NC_010161.1"/>
</dbReference>
<dbReference type="SMR" id="A9IUQ0"/>
<dbReference type="KEGG" id="btr:BT_1215"/>
<dbReference type="eggNOG" id="COG0852">
    <property type="taxonomic scope" value="Bacteria"/>
</dbReference>
<dbReference type="HOGENOM" id="CLU_042628_2_1_5"/>
<dbReference type="Proteomes" id="UP000001592">
    <property type="component" value="Chromosome"/>
</dbReference>
<dbReference type="GO" id="GO:0005886">
    <property type="term" value="C:plasma membrane"/>
    <property type="evidence" value="ECO:0007669"/>
    <property type="project" value="UniProtKB-SubCell"/>
</dbReference>
<dbReference type="GO" id="GO:0008137">
    <property type="term" value="F:NADH dehydrogenase (ubiquinone) activity"/>
    <property type="evidence" value="ECO:0007669"/>
    <property type="project" value="InterPro"/>
</dbReference>
<dbReference type="GO" id="GO:0050136">
    <property type="term" value="F:NADH:ubiquinone reductase (non-electrogenic) activity"/>
    <property type="evidence" value="ECO:0007669"/>
    <property type="project" value="UniProtKB-UniRule"/>
</dbReference>
<dbReference type="GO" id="GO:0048038">
    <property type="term" value="F:quinone binding"/>
    <property type="evidence" value="ECO:0007669"/>
    <property type="project" value="UniProtKB-KW"/>
</dbReference>
<dbReference type="Gene3D" id="3.30.460.80">
    <property type="entry name" value="NADH:ubiquinone oxidoreductase, 30kDa subunit"/>
    <property type="match status" value="1"/>
</dbReference>
<dbReference type="HAMAP" id="MF_01357">
    <property type="entry name" value="NDH1_NuoC"/>
    <property type="match status" value="1"/>
</dbReference>
<dbReference type="InterPro" id="IPR010218">
    <property type="entry name" value="NADH_DH_suC"/>
</dbReference>
<dbReference type="InterPro" id="IPR037232">
    <property type="entry name" value="NADH_quin_OxRdtase_su_C/D-like"/>
</dbReference>
<dbReference type="InterPro" id="IPR001268">
    <property type="entry name" value="NADH_UbQ_OxRdtase_30kDa_su"/>
</dbReference>
<dbReference type="InterPro" id="IPR020396">
    <property type="entry name" value="NADH_UbQ_OxRdtase_CS"/>
</dbReference>
<dbReference type="NCBIfam" id="TIGR01961">
    <property type="entry name" value="NuoC_fam"/>
    <property type="match status" value="1"/>
</dbReference>
<dbReference type="NCBIfam" id="NF004733">
    <property type="entry name" value="PRK06074.1-5"/>
    <property type="match status" value="1"/>
</dbReference>
<dbReference type="PANTHER" id="PTHR10884:SF14">
    <property type="entry name" value="NADH DEHYDROGENASE [UBIQUINONE] IRON-SULFUR PROTEIN 3, MITOCHONDRIAL"/>
    <property type="match status" value="1"/>
</dbReference>
<dbReference type="PANTHER" id="PTHR10884">
    <property type="entry name" value="NADH DEHYDROGENASE UBIQUINONE IRON-SULFUR PROTEIN 3"/>
    <property type="match status" value="1"/>
</dbReference>
<dbReference type="Pfam" id="PF00329">
    <property type="entry name" value="Complex1_30kDa"/>
    <property type="match status" value="1"/>
</dbReference>
<dbReference type="SUPFAM" id="SSF143243">
    <property type="entry name" value="Nqo5-like"/>
    <property type="match status" value="1"/>
</dbReference>
<dbReference type="PROSITE" id="PS00542">
    <property type="entry name" value="COMPLEX1_30K"/>
    <property type="match status" value="1"/>
</dbReference>
<keyword id="KW-0997">Cell inner membrane</keyword>
<keyword id="KW-1003">Cell membrane</keyword>
<keyword id="KW-0472">Membrane</keyword>
<keyword id="KW-0520">NAD</keyword>
<keyword id="KW-0874">Quinone</keyword>
<keyword id="KW-1278">Translocase</keyword>
<keyword id="KW-0813">Transport</keyword>
<keyword id="KW-0830">Ubiquinone</keyword>
<protein>
    <recommendedName>
        <fullName evidence="1">NADH-quinone oxidoreductase subunit C</fullName>
        <ecNumber evidence="1">7.1.1.-</ecNumber>
    </recommendedName>
    <alternativeName>
        <fullName evidence="1">NADH dehydrogenase I subunit C</fullName>
    </alternativeName>
    <alternativeName>
        <fullName evidence="1">NDH-1 subunit C</fullName>
    </alternativeName>
</protein>
<comment type="function">
    <text evidence="1">NDH-1 shuttles electrons from NADH, via FMN and iron-sulfur (Fe-S) centers, to quinones in the respiratory chain. The immediate electron acceptor for the enzyme in this species is believed to be ubiquinone. Couples the redox reaction to proton translocation (for every two electrons transferred, four hydrogen ions are translocated across the cytoplasmic membrane), and thus conserves the redox energy in a proton gradient.</text>
</comment>
<comment type="catalytic activity">
    <reaction evidence="1">
        <text>a quinone + NADH + 5 H(+)(in) = a quinol + NAD(+) + 4 H(+)(out)</text>
        <dbReference type="Rhea" id="RHEA:57888"/>
        <dbReference type="ChEBI" id="CHEBI:15378"/>
        <dbReference type="ChEBI" id="CHEBI:24646"/>
        <dbReference type="ChEBI" id="CHEBI:57540"/>
        <dbReference type="ChEBI" id="CHEBI:57945"/>
        <dbReference type="ChEBI" id="CHEBI:132124"/>
    </reaction>
</comment>
<comment type="subunit">
    <text evidence="1">NDH-1 is composed of 14 different subunits. Subunits NuoB, C, D, E, F, and G constitute the peripheral sector of the complex.</text>
</comment>
<comment type="subcellular location">
    <subcellularLocation>
        <location evidence="1">Cell inner membrane</location>
        <topology evidence="1">Peripheral membrane protein</topology>
        <orientation evidence="1">Cytoplasmic side</orientation>
    </subcellularLocation>
</comment>
<comment type="similarity">
    <text evidence="1">Belongs to the complex I 30 kDa subunit family.</text>
</comment>
<feature type="chain" id="PRO_0000358044" description="NADH-quinone oxidoreductase subunit C">
    <location>
        <begin position="1"/>
        <end position="203"/>
    </location>
</feature>
<sequence length="203" mass="23659">MMDESLVELATYLKNKLGNKLEETVFAFGELTIVARLDAITDVLMFVRDDSHCQFINLTDISGVDYPSRDKRFDVSYQLLSPRENLRLRVKVRTDENTPVASACTVYPGAEWYERETYDMYGILFSGHPDLRRILTDYGFEGYPLRKDFPVTGFVECRYDNEAKRVIYEPVVLRQEMRNFDFLSPWEGGQYVLPCDGKEDEKK</sequence>